<organism>
    <name type="scientific">Prochlorococcus marinus (strain MIT 9303)</name>
    <dbReference type="NCBI Taxonomy" id="59922"/>
    <lineage>
        <taxon>Bacteria</taxon>
        <taxon>Bacillati</taxon>
        <taxon>Cyanobacteriota</taxon>
        <taxon>Cyanophyceae</taxon>
        <taxon>Synechococcales</taxon>
        <taxon>Prochlorococcaceae</taxon>
        <taxon>Prochlorococcus</taxon>
    </lineage>
</organism>
<evidence type="ECO:0000255" key="1">
    <source>
        <dbReference type="HAMAP-Rule" id="MF_00823"/>
    </source>
</evidence>
<evidence type="ECO:0000255" key="2">
    <source>
        <dbReference type="PROSITE-ProRule" id="PRU01137"/>
    </source>
</evidence>
<name>ACCA_PROM3</name>
<dbReference type="EC" id="2.1.3.15" evidence="1"/>
<dbReference type="EMBL" id="CP000554">
    <property type="protein sequence ID" value="ABM77533.1"/>
    <property type="molecule type" value="Genomic_DNA"/>
</dbReference>
<dbReference type="RefSeq" id="WP_011825447.1">
    <property type="nucleotide sequence ID" value="NC_008820.1"/>
</dbReference>
<dbReference type="SMR" id="A2C7S3"/>
<dbReference type="STRING" id="59922.P9303_07821"/>
<dbReference type="KEGG" id="pmf:P9303_07821"/>
<dbReference type="HOGENOM" id="CLU_015486_0_2_3"/>
<dbReference type="BioCyc" id="PMAR59922:G1G80-709-MONOMER"/>
<dbReference type="UniPathway" id="UPA00655">
    <property type="reaction ID" value="UER00711"/>
</dbReference>
<dbReference type="Proteomes" id="UP000002274">
    <property type="component" value="Chromosome"/>
</dbReference>
<dbReference type="GO" id="GO:0009317">
    <property type="term" value="C:acetyl-CoA carboxylase complex"/>
    <property type="evidence" value="ECO:0007669"/>
    <property type="project" value="InterPro"/>
</dbReference>
<dbReference type="GO" id="GO:0003989">
    <property type="term" value="F:acetyl-CoA carboxylase activity"/>
    <property type="evidence" value="ECO:0007669"/>
    <property type="project" value="InterPro"/>
</dbReference>
<dbReference type="GO" id="GO:0005524">
    <property type="term" value="F:ATP binding"/>
    <property type="evidence" value="ECO:0007669"/>
    <property type="project" value="UniProtKB-KW"/>
</dbReference>
<dbReference type="GO" id="GO:0016743">
    <property type="term" value="F:carboxyl- or carbamoyltransferase activity"/>
    <property type="evidence" value="ECO:0007669"/>
    <property type="project" value="UniProtKB-UniRule"/>
</dbReference>
<dbReference type="GO" id="GO:0006633">
    <property type="term" value="P:fatty acid biosynthetic process"/>
    <property type="evidence" value="ECO:0007669"/>
    <property type="project" value="UniProtKB-KW"/>
</dbReference>
<dbReference type="GO" id="GO:2001295">
    <property type="term" value="P:malonyl-CoA biosynthetic process"/>
    <property type="evidence" value="ECO:0007669"/>
    <property type="project" value="UniProtKB-UniRule"/>
</dbReference>
<dbReference type="Gene3D" id="3.90.226.10">
    <property type="entry name" value="2-enoyl-CoA Hydratase, Chain A, domain 1"/>
    <property type="match status" value="1"/>
</dbReference>
<dbReference type="HAMAP" id="MF_00823">
    <property type="entry name" value="AcetylCoA_CT_alpha"/>
    <property type="match status" value="1"/>
</dbReference>
<dbReference type="InterPro" id="IPR001095">
    <property type="entry name" value="Acetyl_CoA_COase_a_su"/>
</dbReference>
<dbReference type="InterPro" id="IPR029045">
    <property type="entry name" value="ClpP/crotonase-like_dom_sf"/>
</dbReference>
<dbReference type="InterPro" id="IPR011763">
    <property type="entry name" value="COA_CT_C"/>
</dbReference>
<dbReference type="NCBIfam" id="TIGR00513">
    <property type="entry name" value="accA"/>
    <property type="match status" value="1"/>
</dbReference>
<dbReference type="NCBIfam" id="NF041504">
    <property type="entry name" value="AccA_sub"/>
    <property type="match status" value="1"/>
</dbReference>
<dbReference type="NCBIfam" id="NF004344">
    <property type="entry name" value="PRK05724.1"/>
    <property type="match status" value="1"/>
</dbReference>
<dbReference type="PANTHER" id="PTHR42853">
    <property type="entry name" value="ACETYL-COENZYME A CARBOXYLASE CARBOXYL TRANSFERASE SUBUNIT ALPHA"/>
    <property type="match status" value="1"/>
</dbReference>
<dbReference type="PANTHER" id="PTHR42853:SF3">
    <property type="entry name" value="ACETYL-COENZYME A CARBOXYLASE CARBOXYL TRANSFERASE SUBUNIT ALPHA, CHLOROPLASTIC"/>
    <property type="match status" value="1"/>
</dbReference>
<dbReference type="Pfam" id="PF03255">
    <property type="entry name" value="ACCA"/>
    <property type="match status" value="1"/>
</dbReference>
<dbReference type="PRINTS" id="PR01069">
    <property type="entry name" value="ACCCTRFRASEA"/>
</dbReference>
<dbReference type="SUPFAM" id="SSF52096">
    <property type="entry name" value="ClpP/crotonase"/>
    <property type="match status" value="1"/>
</dbReference>
<dbReference type="PROSITE" id="PS50989">
    <property type="entry name" value="COA_CT_CTER"/>
    <property type="match status" value="1"/>
</dbReference>
<keyword id="KW-0067">ATP-binding</keyword>
<keyword id="KW-0963">Cytoplasm</keyword>
<keyword id="KW-0275">Fatty acid biosynthesis</keyword>
<keyword id="KW-0276">Fatty acid metabolism</keyword>
<keyword id="KW-0444">Lipid biosynthesis</keyword>
<keyword id="KW-0443">Lipid metabolism</keyword>
<keyword id="KW-0547">Nucleotide-binding</keyword>
<keyword id="KW-0808">Transferase</keyword>
<gene>
    <name evidence="1" type="primary">accA</name>
    <name type="ordered locus">P9303_07821</name>
</gene>
<accession>A2C7S3</accession>
<reference key="1">
    <citation type="journal article" date="2007" name="PLoS Genet.">
        <title>Patterns and implications of gene gain and loss in the evolution of Prochlorococcus.</title>
        <authorList>
            <person name="Kettler G.C."/>
            <person name="Martiny A.C."/>
            <person name="Huang K."/>
            <person name="Zucker J."/>
            <person name="Coleman M.L."/>
            <person name="Rodrigue S."/>
            <person name="Chen F."/>
            <person name="Lapidus A."/>
            <person name="Ferriera S."/>
            <person name="Johnson J."/>
            <person name="Steglich C."/>
            <person name="Church G.M."/>
            <person name="Richardson P."/>
            <person name="Chisholm S.W."/>
        </authorList>
    </citation>
    <scope>NUCLEOTIDE SEQUENCE [LARGE SCALE GENOMIC DNA]</scope>
    <source>
        <strain>MIT 9303</strain>
    </source>
</reference>
<proteinExistence type="inferred from homology"/>
<protein>
    <recommendedName>
        <fullName evidence="1">Acetyl-coenzyme A carboxylase carboxyl transferase subunit alpha</fullName>
        <shortName evidence="1">ACCase subunit alpha</shortName>
        <shortName evidence="1">Acetyl-CoA carboxylase carboxyltransferase subunit alpha</shortName>
        <ecNumber evidence="1">2.1.3.15</ecNumber>
    </recommendedName>
</protein>
<comment type="function">
    <text evidence="1">Component of the acetyl coenzyme A carboxylase (ACC) complex. First, biotin carboxylase catalyzes the carboxylation of biotin on its carrier protein (BCCP) and then the CO(2) group is transferred by the carboxyltransferase to acetyl-CoA to form malonyl-CoA.</text>
</comment>
<comment type="catalytic activity">
    <reaction evidence="1">
        <text>N(6)-carboxybiotinyl-L-lysyl-[protein] + acetyl-CoA = N(6)-biotinyl-L-lysyl-[protein] + malonyl-CoA</text>
        <dbReference type="Rhea" id="RHEA:54728"/>
        <dbReference type="Rhea" id="RHEA-COMP:10505"/>
        <dbReference type="Rhea" id="RHEA-COMP:10506"/>
        <dbReference type="ChEBI" id="CHEBI:57288"/>
        <dbReference type="ChEBI" id="CHEBI:57384"/>
        <dbReference type="ChEBI" id="CHEBI:83144"/>
        <dbReference type="ChEBI" id="CHEBI:83145"/>
        <dbReference type="EC" id="2.1.3.15"/>
    </reaction>
</comment>
<comment type="pathway">
    <text evidence="1">Lipid metabolism; malonyl-CoA biosynthesis; malonyl-CoA from acetyl-CoA: step 1/1.</text>
</comment>
<comment type="subunit">
    <text evidence="1">Acetyl-CoA carboxylase is a heterohexamer composed of biotin carboxyl carrier protein (AccB), biotin carboxylase (AccC) and two subunits each of ACCase subunit alpha (AccA) and ACCase subunit beta (AccD).</text>
</comment>
<comment type="subcellular location">
    <subcellularLocation>
        <location evidence="1">Cytoplasm</location>
    </subcellularLocation>
</comment>
<comment type="similarity">
    <text evidence="1">Belongs to the AccA family.</text>
</comment>
<sequence length="329" mass="36302">MARRYLFEFEKPLVELEQQIEQIRELARDSEVDVSQQLLQLETLAARRREEIFQALTPAEKIQVARHPHRPSTLDFIQMFCDDWVELHGDRRGSDDQALVGGVGRIGKRSVLLIGHQKGRDTKENVARNFGMATPGGYRKALRLMDHADRFRLPILTFIDTPGAYAGLLAEEQGQGEAIAVNLREMFRLRVPVIATVIGEGGSGGALGIGVADRLLMFEHSVYTVASPEACASILWRDAAKAPEAAAALKITGPDLLSLGVVDEVLPEPAGGNNWAPLQAGEVLREAIERHLDDLLGLKVNQLRESRYRKFRAMGRVLDPSSSETGLPA</sequence>
<feature type="chain" id="PRO_1000062650" description="Acetyl-coenzyme A carboxylase carboxyl transferase subunit alpha">
    <location>
        <begin position="1"/>
        <end position="329"/>
    </location>
</feature>
<feature type="domain" description="CoA carboxyltransferase C-terminal" evidence="2">
    <location>
        <begin position="40"/>
        <end position="294"/>
    </location>
</feature>